<feature type="chain" id="PRO_0000079860" description="Protein DEK">
    <location>
        <begin position="1"/>
        <end position="378"/>
    </location>
</feature>
<feature type="domain" description="SAP">
    <location>
        <begin position="149"/>
        <end position="183"/>
    </location>
</feature>
<feature type="domain" description="DEK-C" evidence="4">
    <location>
        <begin position="322"/>
        <end position="378"/>
    </location>
</feature>
<feature type="DNA-binding region" evidence="1">
    <location>
        <begin position="340"/>
        <end position="354"/>
    </location>
</feature>
<feature type="DNA-binding region" evidence="1">
    <location>
        <begin position="370"/>
        <end position="374"/>
    </location>
</feature>
<feature type="region of interest" description="Disordered" evidence="5">
    <location>
        <begin position="1"/>
        <end position="65"/>
    </location>
</feature>
<feature type="region of interest" description="Disordered" evidence="5">
    <location>
        <begin position="186"/>
        <end position="329"/>
    </location>
</feature>
<feature type="short sequence motif" description="Nuclear localization signal" evidence="3">
    <location>
        <begin position="207"/>
        <end position="223"/>
    </location>
</feature>
<feature type="compositionally biased region" description="Basic and acidic residues" evidence="5">
    <location>
        <begin position="20"/>
        <end position="31"/>
    </location>
</feature>
<feature type="compositionally biased region" description="Acidic residues" evidence="5">
    <location>
        <begin position="32"/>
        <end position="49"/>
    </location>
</feature>
<feature type="compositionally biased region" description="Basic and acidic residues" evidence="5">
    <location>
        <begin position="50"/>
        <end position="65"/>
    </location>
</feature>
<feature type="compositionally biased region" description="Basic residues" evidence="5">
    <location>
        <begin position="196"/>
        <end position="205"/>
    </location>
</feature>
<feature type="compositionally biased region" description="Acidic residues" evidence="5">
    <location>
        <begin position="245"/>
        <end position="256"/>
    </location>
</feature>
<feature type="compositionally biased region" description="Basic residues" evidence="5">
    <location>
        <begin position="261"/>
        <end position="280"/>
    </location>
</feature>
<feature type="compositionally biased region" description="Low complexity" evidence="5">
    <location>
        <begin position="281"/>
        <end position="299"/>
    </location>
</feature>
<feature type="modified residue" description="Phosphothreonine" evidence="2">
    <location>
        <position position="14"/>
    </location>
</feature>
<feature type="modified residue" description="Phosphothreonine" evidence="6">
    <location>
        <position position="16"/>
    </location>
</feature>
<feature type="modified residue" description="Phosphoserine" evidence="6">
    <location>
        <position position="20"/>
    </location>
</feature>
<feature type="modified residue" description="Phosphoserine" evidence="6">
    <location>
        <position position="33"/>
    </location>
</feature>
<feature type="modified residue" description="Phosphoserine" evidence="2">
    <location>
        <position position="53"/>
    </location>
</feature>
<feature type="modified residue" description="Phosphoserine" evidence="2">
    <location>
        <position position="74"/>
    </location>
</feature>
<feature type="modified residue" description="Phosphoserine" evidence="2">
    <location>
        <position position="123"/>
    </location>
</feature>
<feature type="modified residue" description="Phosphoserine" evidence="2">
    <location>
        <position position="124"/>
    </location>
</feature>
<feature type="modified residue" description="Phosphoserine" evidence="2">
    <location>
        <position position="161"/>
    </location>
</feature>
<feature type="modified residue" description="Phosphoserine" evidence="2">
    <location>
        <position position="203"/>
    </location>
</feature>
<feature type="modified residue" description="Phosphoserine" evidence="2">
    <location>
        <position position="206"/>
    </location>
</feature>
<feature type="modified residue" description="Phosphoserine" evidence="2">
    <location>
        <position position="212"/>
    </location>
</feature>
<feature type="modified residue" description="Phosphoserine" evidence="2">
    <location>
        <position position="229"/>
    </location>
</feature>
<feature type="modified residue" description="Phosphoserine" evidence="2">
    <location>
        <position position="232"/>
    </location>
</feature>
<feature type="modified residue" description="Phosphoserine" evidence="2">
    <location>
        <position position="233"/>
    </location>
</feature>
<feature type="modified residue" description="Phosphoserine" evidence="2">
    <location>
        <position position="234"/>
    </location>
</feature>
<feature type="modified residue" description="Phosphoserine" evidence="6">
    <location>
        <position position="245"/>
    </location>
</feature>
<feature type="modified residue" description="Phosphoserine" evidence="6">
    <location>
        <position position="246"/>
    </location>
</feature>
<feature type="modified residue" description="Phosphoserine" evidence="6">
    <location>
        <position position="253"/>
    </location>
</feature>
<feature type="modified residue" description="ADP-ribosylserine" evidence="2">
    <location>
        <position position="282"/>
    </location>
</feature>
<feature type="modified residue" description="Phosphoserine" evidence="2">
    <location>
        <position position="290"/>
    </location>
</feature>
<feature type="modified residue" description="Phosphoserine" evidence="2">
    <location>
        <position position="291"/>
    </location>
</feature>
<feature type="modified residue" description="Phosphothreonine" evidence="2">
    <location>
        <position position="292"/>
    </location>
</feature>
<feature type="modified residue" description="Phosphothreonine" evidence="2">
    <location>
        <position position="293"/>
    </location>
</feature>
<feature type="modified residue" description="Phosphoserine" evidence="2">
    <location>
        <position position="299"/>
    </location>
</feature>
<feature type="modified residue" description="Phosphoserine" evidence="2">
    <location>
        <position position="304"/>
    </location>
</feature>
<feature type="modified residue" description="Phosphoserine" evidence="2">
    <location>
        <position position="306"/>
    </location>
</feature>
<feature type="modified residue" description="Phosphoserine" evidence="2">
    <location>
        <position position="309"/>
    </location>
</feature>
<feature type="modified residue" description="Phosphoserine" evidence="6">
    <location>
        <position position="310"/>
    </location>
</feature>
<evidence type="ECO:0000250" key="1"/>
<evidence type="ECO:0000250" key="2">
    <source>
        <dbReference type="UniProtKB" id="P35659"/>
    </source>
</evidence>
<evidence type="ECO:0000255" key="3"/>
<evidence type="ECO:0000255" key="4">
    <source>
        <dbReference type="PROSITE-ProRule" id="PRU01342"/>
    </source>
</evidence>
<evidence type="ECO:0000256" key="5">
    <source>
        <dbReference type="SAM" id="MobiDB-lite"/>
    </source>
</evidence>
<evidence type="ECO:0007744" key="6">
    <source>
    </source>
</evidence>
<sequence>MSAAAAPAAEGEDTPTPPASEKEPEMPGPREESEEEEEEDDDDEDEEEEKEKSLIVEGKREKRKVERLTMQVSSLQREPFTIAQGKGQKLCEIERIHFFLSKKKTDELRNLHKLLYNRPGTVSSLKKNVGQFSGFPFEKGSTQYKKKEEMLKKYRNAMLKSICEVLDLERSGVNSELVKRILNFLMHPKPSGKPLPKSKKSSSKGSKKERNSSGTTRKSKQTKCPEILSDESSSDEDEKKNKDESSEDEEKESEEEQPPKKTSKKEKAKQKATTKSKKSVKSANVKKADSSTTKKNQNSSKKESGSEDSSDDEPLIKKLKKPPTDEELKETVKKLLADANLEEVTMKQICKEVYENYPAYDLTERKDFIKTTVKELIS</sequence>
<organism>
    <name type="scientific">Rattus norvegicus</name>
    <name type="common">Rat</name>
    <dbReference type="NCBI Taxonomy" id="10116"/>
    <lineage>
        <taxon>Eukaryota</taxon>
        <taxon>Metazoa</taxon>
        <taxon>Chordata</taxon>
        <taxon>Craniata</taxon>
        <taxon>Vertebrata</taxon>
        <taxon>Euteleostomi</taxon>
        <taxon>Mammalia</taxon>
        <taxon>Eutheria</taxon>
        <taxon>Euarchontoglires</taxon>
        <taxon>Glires</taxon>
        <taxon>Rodentia</taxon>
        <taxon>Myomorpha</taxon>
        <taxon>Muroidea</taxon>
        <taxon>Muridae</taxon>
        <taxon>Murinae</taxon>
        <taxon>Rattus</taxon>
    </lineage>
</organism>
<comment type="function">
    <text evidence="1">Involved in chromatin organization.</text>
</comment>
<comment type="subunit">
    <text evidence="1">Found in a mRNA splicing-dependent exon junction complex (EJC) with DEK, RBM8A, RNPS1, SRRM1 and ALYREF/THOC4. Interacts with histones H2A, H2B, H3, H4, acetylated histone H4, non-phosphorylated DAXX and HDAC2. Component of the B-WICH complex, at least composed of SMARCA5/SNF2H, BAZ1B/WSTF, SF3B1, DEK, MYO1C, ERCC6, MYBBP1A and DDX21. Binds DNA (By similarity).</text>
</comment>
<comment type="subcellular location">
    <subcellularLocation>
        <location>Nucleus</location>
    </subcellularLocation>
    <text evidence="1">Enriched in regions where chromatin is decondensed or sparse in the interphase nuclei.</text>
</comment>
<comment type="PTM">
    <text evidence="1">Phosphorylated by CK2. Phosphorylation fluctuates during the cell cycle with a moderate peak during G(1) phase, and weakens the binding of DEK to DNA (By similarity).</text>
</comment>
<gene>
    <name type="primary">Dek</name>
</gene>
<accession>Q6AXS3</accession>
<proteinExistence type="evidence at protein level"/>
<reference key="1">
    <citation type="journal article" date="2004" name="Genome Res.">
        <title>The status, quality, and expansion of the NIH full-length cDNA project: the Mammalian Gene Collection (MGC).</title>
        <authorList>
            <consortium name="The MGC Project Team"/>
        </authorList>
    </citation>
    <scope>NUCLEOTIDE SEQUENCE [LARGE SCALE MRNA]</scope>
    <source>
        <tissue>Kidney</tissue>
    </source>
</reference>
<reference key="2">
    <citation type="journal article" date="2012" name="Nat. Commun.">
        <title>Quantitative maps of protein phosphorylation sites across 14 different rat organs and tissues.</title>
        <authorList>
            <person name="Lundby A."/>
            <person name="Secher A."/>
            <person name="Lage K."/>
            <person name="Nordsborg N.B."/>
            <person name="Dmytriyev A."/>
            <person name="Lundby C."/>
            <person name="Olsen J.V."/>
        </authorList>
    </citation>
    <scope>PHOSPHORYLATION [LARGE SCALE ANALYSIS] AT THR-16; SER-20; SER-33; SER-245; SER-246; SER-253 AND SER-310</scope>
    <scope>IDENTIFICATION BY MASS SPECTROMETRY [LARGE SCALE ANALYSIS]</scope>
</reference>
<dbReference type="EMBL" id="BC079344">
    <property type="protein sequence ID" value="AAH79344.1"/>
    <property type="molecule type" value="mRNA"/>
</dbReference>
<dbReference type="RefSeq" id="NP_001004255.1">
    <property type="nucleotide sequence ID" value="NM_001004255.1"/>
</dbReference>
<dbReference type="RefSeq" id="XP_038951597.1">
    <property type="nucleotide sequence ID" value="XM_039095669.2"/>
</dbReference>
<dbReference type="BMRB" id="Q6AXS3"/>
<dbReference type="SMR" id="Q6AXS3"/>
<dbReference type="BioGRID" id="258556">
    <property type="interactions" value="1"/>
</dbReference>
<dbReference type="FunCoup" id="Q6AXS3">
    <property type="interactions" value="2932"/>
</dbReference>
<dbReference type="IntAct" id="Q6AXS3">
    <property type="interactions" value="5"/>
</dbReference>
<dbReference type="STRING" id="10116.ENSRNOP00000021751"/>
<dbReference type="GlyGen" id="Q6AXS3">
    <property type="glycosylation" value="1 site"/>
</dbReference>
<dbReference type="iPTMnet" id="Q6AXS3"/>
<dbReference type="PhosphoSitePlus" id="Q6AXS3"/>
<dbReference type="jPOST" id="Q6AXS3"/>
<dbReference type="PaxDb" id="10116-ENSRNOP00000021751"/>
<dbReference type="Ensembl" id="ENSRNOT00000021751.5">
    <property type="protein sequence ID" value="ENSRNOP00000021751.4"/>
    <property type="gene ID" value="ENSRNOG00000016152.5"/>
</dbReference>
<dbReference type="GeneID" id="306817"/>
<dbReference type="KEGG" id="rno:306817"/>
<dbReference type="AGR" id="RGD:1303246"/>
<dbReference type="CTD" id="7913"/>
<dbReference type="RGD" id="1303246">
    <property type="gene designation" value="Dek"/>
</dbReference>
<dbReference type="eggNOG" id="KOG2266">
    <property type="taxonomic scope" value="Eukaryota"/>
</dbReference>
<dbReference type="GeneTree" id="ENSGT00390000017282"/>
<dbReference type="HOGENOM" id="CLU_041060_0_1_1"/>
<dbReference type="InParanoid" id="Q6AXS3"/>
<dbReference type="PhylomeDB" id="Q6AXS3"/>
<dbReference type="TreeFam" id="TF324696"/>
<dbReference type="Reactome" id="R-RNO-5250924">
    <property type="pathway name" value="B-WICH complex positively regulates rRNA expression"/>
</dbReference>
<dbReference type="Reactome" id="R-RNO-8864260">
    <property type="pathway name" value="Transcriptional regulation by the AP-2 (TFAP2) family of transcription factors"/>
</dbReference>
<dbReference type="PRO" id="PR:Q6AXS3"/>
<dbReference type="Proteomes" id="UP000002494">
    <property type="component" value="Chromosome 17"/>
</dbReference>
<dbReference type="Bgee" id="ENSRNOG00000016152">
    <property type="expression patterns" value="Expressed in thymus and 20 other cell types or tissues"/>
</dbReference>
<dbReference type="GO" id="GO:0110016">
    <property type="term" value="C:B-WICH complex"/>
    <property type="evidence" value="ECO:0000266"/>
    <property type="project" value="RGD"/>
</dbReference>
<dbReference type="GO" id="GO:0043292">
    <property type="term" value="C:contractile muscle fiber"/>
    <property type="evidence" value="ECO:0000266"/>
    <property type="project" value="RGD"/>
</dbReference>
<dbReference type="GO" id="GO:0005634">
    <property type="term" value="C:nucleus"/>
    <property type="evidence" value="ECO:0000266"/>
    <property type="project" value="RGD"/>
</dbReference>
<dbReference type="GO" id="GO:0003677">
    <property type="term" value="F:DNA binding"/>
    <property type="evidence" value="ECO:0007669"/>
    <property type="project" value="UniProtKB-KW"/>
</dbReference>
<dbReference type="GO" id="GO:0042393">
    <property type="term" value="F:histone binding"/>
    <property type="evidence" value="ECO:0000266"/>
    <property type="project" value="RGD"/>
</dbReference>
<dbReference type="GO" id="GO:0006325">
    <property type="term" value="P:chromatin organization"/>
    <property type="evidence" value="ECO:0007669"/>
    <property type="project" value="UniProtKB-KW"/>
</dbReference>
<dbReference type="GO" id="GO:0045945">
    <property type="term" value="P:positive regulation of transcription by RNA polymerase III"/>
    <property type="evidence" value="ECO:0000266"/>
    <property type="project" value="RGD"/>
</dbReference>
<dbReference type="GO" id="GO:2000779">
    <property type="term" value="P:regulation of double-strand break repair"/>
    <property type="evidence" value="ECO:0000266"/>
    <property type="project" value="RGD"/>
</dbReference>
<dbReference type="GO" id="GO:2001032">
    <property type="term" value="P:regulation of double-strand break repair via nonhomologous end joining"/>
    <property type="evidence" value="ECO:0000266"/>
    <property type="project" value="RGD"/>
</dbReference>
<dbReference type="FunFam" id="1.10.10.60:FF:000148">
    <property type="entry name" value="Dek, isoform B"/>
    <property type="match status" value="1"/>
</dbReference>
<dbReference type="Gene3D" id="1.10.10.60">
    <property type="entry name" value="Homeodomain-like"/>
    <property type="match status" value="1"/>
</dbReference>
<dbReference type="InterPro" id="IPR044198">
    <property type="entry name" value="DEK"/>
</dbReference>
<dbReference type="InterPro" id="IPR014876">
    <property type="entry name" value="DEK_C"/>
</dbReference>
<dbReference type="InterPro" id="IPR003034">
    <property type="entry name" value="SAP_dom"/>
</dbReference>
<dbReference type="PANTHER" id="PTHR13468">
    <property type="entry name" value="DEK PROTEIN"/>
    <property type="match status" value="1"/>
</dbReference>
<dbReference type="PANTHER" id="PTHR13468:SF1">
    <property type="entry name" value="PROTEIN DEK"/>
    <property type="match status" value="1"/>
</dbReference>
<dbReference type="Pfam" id="PF08766">
    <property type="entry name" value="DEK_C"/>
    <property type="match status" value="1"/>
</dbReference>
<dbReference type="Pfam" id="PF02037">
    <property type="entry name" value="SAP"/>
    <property type="match status" value="1"/>
</dbReference>
<dbReference type="SMART" id="SM00513">
    <property type="entry name" value="SAP"/>
    <property type="match status" value="1"/>
</dbReference>
<dbReference type="SUPFAM" id="SSF109715">
    <property type="entry name" value="DEK C-terminal domain"/>
    <property type="match status" value="1"/>
</dbReference>
<dbReference type="PROSITE" id="PS51998">
    <property type="entry name" value="DEK_C"/>
    <property type="match status" value="1"/>
</dbReference>
<keyword id="KW-0013">ADP-ribosylation</keyword>
<keyword id="KW-0156">Chromatin regulator</keyword>
<keyword id="KW-0238">DNA-binding</keyword>
<keyword id="KW-0539">Nucleus</keyword>
<keyword id="KW-0597">Phosphoprotein</keyword>
<keyword id="KW-1185">Reference proteome</keyword>
<protein>
    <recommendedName>
        <fullName>Protein DEK</fullName>
    </recommendedName>
</protein>
<name>DEK_RAT</name>